<gene>
    <name evidence="1" type="primary">rpsB</name>
    <name type="ordered locus">COPRO5265_0738</name>
</gene>
<name>RS2_COPPD</name>
<proteinExistence type="inferred from homology"/>
<protein>
    <recommendedName>
        <fullName evidence="1">Small ribosomal subunit protein uS2</fullName>
    </recommendedName>
    <alternativeName>
        <fullName evidence="2">30S ribosomal protein S2</fullName>
    </alternativeName>
</protein>
<organism>
    <name type="scientific">Coprothermobacter proteolyticus (strain ATCC 35245 / DSM 5265 / OCM 4 / BT)</name>
    <dbReference type="NCBI Taxonomy" id="309798"/>
    <lineage>
        <taxon>Bacteria</taxon>
        <taxon>Pseudomonadati</taxon>
        <taxon>Coprothermobacterota</taxon>
        <taxon>Coprothermobacteria</taxon>
        <taxon>Coprothermobacterales</taxon>
        <taxon>Coprothermobacteraceae</taxon>
        <taxon>Coprothermobacter</taxon>
    </lineage>
</organism>
<reference key="1">
    <citation type="submission" date="2008-08" db="EMBL/GenBank/DDBJ databases">
        <title>The complete genome sequence of Coprothermobacter proteolyticus strain ATCC 5245 / DSM 5265 / BT.</title>
        <authorList>
            <person name="Dodson R.J."/>
            <person name="Durkin A.S."/>
            <person name="Wu M."/>
            <person name="Eisen J."/>
            <person name="Sutton G."/>
        </authorList>
    </citation>
    <scope>NUCLEOTIDE SEQUENCE [LARGE SCALE GENOMIC DNA]</scope>
    <source>
        <strain>ATCC 35245 / DSM 5265 / OCM 4 / BT</strain>
    </source>
</reference>
<keyword id="KW-1185">Reference proteome</keyword>
<keyword id="KW-0687">Ribonucleoprotein</keyword>
<keyword id="KW-0689">Ribosomal protein</keyword>
<comment type="similarity">
    <text evidence="1">Belongs to the universal ribosomal protein uS2 family.</text>
</comment>
<accession>B5Y8I9</accession>
<sequence>MAVVTLKQLLEAGVHFGHQTRRWNPKMKPFIYAERNGIYIIDLQKTYEQLEAAYSFVRDASKEGKTVLFVGTKRQAQEPIREEAERAGMPYVNQRWIGGFLTNFRTIRTRIKKYKELLALREQGYIESLDYKEQKRVMRELEKLDKYYSGVKDMDTLPDILFVVDTKKEEAAIREAKKIGIPVVAMIDTNCDPDLVDYPIPANDDAVRAIKLITSKIADAILEGREGRQGIVSSEGQQASMEEIAEELEAIDETEKYLDLIDEEKEEE</sequence>
<feature type="chain" id="PRO_1000115009" description="Small ribosomal subunit protein uS2">
    <location>
        <begin position="1"/>
        <end position="268"/>
    </location>
</feature>
<dbReference type="EMBL" id="CP001145">
    <property type="protein sequence ID" value="ACI17452.1"/>
    <property type="molecule type" value="Genomic_DNA"/>
</dbReference>
<dbReference type="RefSeq" id="WP_012544104.1">
    <property type="nucleotide sequence ID" value="NC_011295.1"/>
</dbReference>
<dbReference type="SMR" id="B5Y8I9"/>
<dbReference type="STRING" id="309798.COPRO5265_0738"/>
<dbReference type="KEGG" id="cpo:COPRO5265_0738"/>
<dbReference type="eggNOG" id="COG0052">
    <property type="taxonomic scope" value="Bacteria"/>
</dbReference>
<dbReference type="HOGENOM" id="CLU_040318_1_2_9"/>
<dbReference type="OrthoDB" id="9808036at2"/>
<dbReference type="Proteomes" id="UP000001732">
    <property type="component" value="Chromosome"/>
</dbReference>
<dbReference type="GO" id="GO:0022627">
    <property type="term" value="C:cytosolic small ribosomal subunit"/>
    <property type="evidence" value="ECO:0007669"/>
    <property type="project" value="TreeGrafter"/>
</dbReference>
<dbReference type="GO" id="GO:0003735">
    <property type="term" value="F:structural constituent of ribosome"/>
    <property type="evidence" value="ECO:0007669"/>
    <property type="project" value="InterPro"/>
</dbReference>
<dbReference type="GO" id="GO:0006412">
    <property type="term" value="P:translation"/>
    <property type="evidence" value="ECO:0007669"/>
    <property type="project" value="UniProtKB-UniRule"/>
</dbReference>
<dbReference type="CDD" id="cd01425">
    <property type="entry name" value="RPS2"/>
    <property type="match status" value="1"/>
</dbReference>
<dbReference type="Gene3D" id="3.40.50.10490">
    <property type="entry name" value="Glucose-6-phosphate isomerase like protein, domain 1"/>
    <property type="match status" value="1"/>
</dbReference>
<dbReference type="Gene3D" id="1.10.287.610">
    <property type="entry name" value="Helix hairpin bin"/>
    <property type="match status" value="1"/>
</dbReference>
<dbReference type="HAMAP" id="MF_00291_B">
    <property type="entry name" value="Ribosomal_uS2_B"/>
    <property type="match status" value="1"/>
</dbReference>
<dbReference type="InterPro" id="IPR001865">
    <property type="entry name" value="Ribosomal_uS2"/>
</dbReference>
<dbReference type="InterPro" id="IPR005706">
    <property type="entry name" value="Ribosomal_uS2_bac/mit/plastid"/>
</dbReference>
<dbReference type="InterPro" id="IPR018130">
    <property type="entry name" value="Ribosomal_uS2_CS"/>
</dbReference>
<dbReference type="InterPro" id="IPR023591">
    <property type="entry name" value="Ribosomal_uS2_flav_dom_sf"/>
</dbReference>
<dbReference type="NCBIfam" id="TIGR01011">
    <property type="entry name" value="rpsB_bact"/>
    <property type="match status" value="1"/>
</dbReference>
<dbReference type="PANTHER" id="PTHR12534">
    <property type="entry name" value="30S RIBOSOMAL PROTEIN S2 PROKARYOTIC AND ORGANELLAR"/>
    <property type="match status" value="1"/>
</dbReference>
<dbReference type="PANTHER" id="PTHR12534:SF0">
    <property type="entry name" value="SMALL RIBOSOMAL SUBUNIT PROTEIN US2M"/>
    <property type="match status" value="1"/>
</dbReference>
<dbReference type="Pfam" id="PF00318">
    <property type="entry name" value="Ribosomal_S2"/>
    <property type="match status" value="1"/>
</dbReference>
<dbReference type="PRINTS" id="PR00395">
    <property type="entry name" value="RIBOSOMALS2"/>
</dbReference>
<dbReference type="SUPFAM" id="SSF52313">
    <property type="entry name" value="Ribosomal protein S2"/>
    <property type="match status" value="1"/>
</dbReference>
<dbReference type="PROSITE" id="PS00962">
    <property type="entry name" value="RIBOSOMAL_S2_1"/>
    <property type="match status" value="1"/>
</dbReference>
<dbReference type="PROSITE" id="PS00963">
    <property type="entry name" value="RIBOSOMAL_S2_2"/>
    <property type="match status" value="1"/>
</dbReference>
<evidence type="ECO:0000255" key="1">
    <source>
        <dbReference type="HAMAP-Rule" id="MF_00291"/>
    </source>
</evidence>
<evidence type="ECO:0000305" key="2"/>